<accession>P67799</accession>
<accession>B2L9T5</accession>
<accession>P29864</accession>
<organism>
    <name type="scientific">Drosophila pseudoobscura pseudoobscura</name>
    <name type="common">Fruit fly</name>
    <dbReference type="NCBI Taxonomy" id="46245"/>
    <lineage>
        <taxon>Eukaryota</taxon>
        <taxon>Metazoa</taxon>
        <taxon>Ecdysozoa</taxon>
        <taxon>Arthropoda</taxon>
        <taxon>Hexapoda</taxon>
        <taxon>Insecta</taxon>
        <taxon>Pterygota</taxon>
        <taxon>Neoptera</taxon>
        <taxon>Endopterygota</taxon>
        <taxon>Diptera</taxon>
        <taxon>Brachycera</taxon>
        <taxon>Muscomorpha</taxon>
        <taxon>Ephydroidea</taxon>
        <taxon>Drosophilidae</taxon>
        <taxon>Drosophila</taxon>
        <taxon>Sophophora</taxon>
    </lineage>
</organism>
<feature type="chain" id="PRO_0000183584" description="Cytochrome c oxidase subunit 2">
    <location>
        <begin position="1"/>
        <end position="229"/>
    </location>
</feature>
<feature type="topological domain" description="Mitochondrial intermembrane" evidence="2">
    <location>
        <begin position="1"/>
        <end position="26"/>
    </location>
</feature>
<feature type="transmembrane region" description="Helical" evidence="2">
    <location>
        <begin position="27"/>
        <end position="48"/>
    </location>
</feature>
<feature type="topological domain" description="Mitochondrial matrix" evidence="2">
    <location>
        <begin position="49"/>
        <end position="62"/>
    </location>
</feature>
<feature type="transmembrane region" description="Helical" evidence="2">
    <location>
        <begin position="63"/>
        <end position="82"/>
    </location>
</feature>
<feature type="topological domain" description="Mitochondrial intermembrane" evidence="2">
    <location>
        <begin position="83"/>
        <end position="229"/>
    </location>
</feature>
<feature type="binding site" evidence="1">
    <location>
        <position position="161"/>
    </location>
    <ligand>
        <name>Cu cation</name>
        <dbReference type="ChEBI" id="CHEBI:23378"/>
        <label>A1</label>
    </ligand>
</feature>
<feature type="binding site" evidence="1">
    <location>
        <position position="196"/>
    </location>
    <ligand>
        <name>Cu cation</name>
        <dbReference type="ChEBI" id="CHEBI:23378"/>
        <label>A1</label>
    </ligand>
</feature>
<feature type="binding site" evidence="1">
    <location>
        <position position="196"/>
    </location>
    <ligand>
        <name>Cu cation</name>
        <dbReference type="ChEBI" id="CHEBI:23378"/>
        <label>A2</label>
    </ligand>
</feature>
<feature type="binding site" evidence="1">
    <location>
        <position position="198"/>
    </location>
    <ligand>
        <name>Cu cation</name>
        <dbReference type="ChEBI" id="CHEBI:23378"/>
        <label>A2</label>
    </ligand>
</feature>
<feature type="binding site" evidence="1">
    <location>
        <position position="198"/>
    </location>
    <ligand>
        <name>Mg(2+)</name>
        <dbReference type="ChEBI" id="CHEBI:18420"/>
        <note>ligand shared with subunit 1</note>
    </ligand>
</feature>
<feature type="binding site" evidence="1">
    <location>
        <position position="200"/>
    </location>
    <ligand>
        <name>Cu cation</name>
        <dbReference type="ChEBI" id="CHEBI:23378"/>
        <label>A1</label>
    </ligand>
</feature>
<feature type="binding site" evidence="1">
    <location>
        <position position="200"/>
    </location>
    <ligand>
        <name>Cu cation</name>
        <dbReference type="ChEBI" id="CHEBI:23378"/>
        <label>A2</label>
    </ligand>
</feature>
<feature type="binding site" evidence="1">
    <location>
        <position position="204"/>
    </location>
    <ligand>
        <name>Cu cation</name>
        <dbReference type="ChEBI" id="CHEBI:23378"/>
        <label>A2</label>
    </ligand>
</feature>
<feature type="binding site" evidence="1">
    <location>
        <position position="207"/>
    </location>
    <ligand>
        <name>Cu cation</name>
        <dbReference type="ChEBI" id="CHEBI:23378"/>
        <label>A1</label>
    </ligand>
</feature>
<evidence type="ECO:0000250" key="1">
    <source>
        <dbReference type="UniProtKB" id="P00410"/>
    </source>
</evidence>
<evidence type="ECO:0000255" key="2"/>
<evidence type="ECO:0000305" key="3"/>
<proteinExistence type="inferred from homology"/>
<comment type="function">
    <text evidence="1">Component of the cytochrome c oxidase, the last enzyme in the mitochondrial electron transport chain which drives oxidative phosphorylation. The respiratory chain contains 3 multisubunit complexes succinate dehydrogenase (complex II, CII), ubiquinol-cytochrome c oxidoreductase (cytochrome b-c1 complex, complex III, CIII) and cytochrome c oxidase (complex IV, CIV), that cooperate to transfer electrons derived from NADH and succinate to molecular oxygen, creating an electrochemical gradient over the inner membrane that drives transmembrane transport and the ATP synthase. Cytochrome c oxidase is the component of the respiratory chain that catalyzes the reduction of oxygen to water. Electrons originating from reduced cytochrome c in the intermembrane space (IMS) are transferred via the dinuclear copper A center (CU(A)) of subunit 2 and heme A of subunit 1 to the active site in subunit 1, a binuclear center (BNC) formed by heme A3 and copper B (CU(B)). The BNC reduces molecular oxygen to 2 water molecules using 4 electrons from cytochrome c in the IMS and 4 protons from the mitochondrial matrix.</text>
</comment>
<comment type="catalytic activity">
    <reaction evidence="1">
        <text>4 Fe(II)-[cytochrome c] + O2 + 8 H(+)(in) = 4 Fe(III)-[cytochrome c] + 2 H2O + 4 H(+)(out)</text>
        <dbReference type="Rhea" id="RHEA:11436"/>
        <dbReference type="Rhea" id="RHEA-COMP:10350"/>
        <dbReference type="Rhea" id="RHEA-COMP:14399"/>
        <dbReference type="ChEBI" id="CHEBI:15377"/>
        <dbReference type="ChEBI" id="CHEBI:15378"/>
        <dbReference type="ChEBI" id="CHEBI:15379"/>
        <dbReference type="ChEBI" id="CHEBI:29033"/>
        <dbReference type="ChEBI" id="CHEBI:29034"/>
        <dbReference type="EC" id="7.1.1.9"/>
    </reaction>
    <physiologicalReaction direction="left-to-right" evidence="1">
        <dbReference type="Rhea" id="RHEA:11437"/>
    </physiologicalReaction>
</comment>
<comment type="cofactor">
    <cofactor evidence="1">
        <name>Cu cation</name>
        <dbReference type="ChEBI" id="CHEBI:23378"/>
    </cofactor>
    <text evidence="1">Binds a dinuclear copper A center per subunit.</text>
</comment>
<comment type="subunit">
    <text evidence="1">Component of the cytochrome c oxidase (complex IV, CIV), a multisubunit enzyme composed of a catalytic core of 3 subunits and several supernumerary subunits. The complex exists as a monomer or a dimer and forms supercomplexes (SCs) in the inner mitochondrial membrane with ubiquinol-cytochrome c oxidoreductase (cytochrome b-c1 complex, complex III, CIII).</text>
</comment>
<comment type="subcellular location">
    <subcellularLocation>
        <location evidence="1">Mitochondrion inner membrane</location>
        <topology evidence="1">Multi-pass membrane protein</topology>
    </subcellularLocation>
</comment>
<comment type="similarity">
    <text evidence="3">Belongs to the cytochrome c oxidase subunit 2 family.</text>
</comment>
<geneLocation type="mitochondrion"/>
<reference key="1">
    <citation type="journal article" date="1992" name="Mol. Phylogenet. Evol.">
        <title>Evolution of the mitochondrial cytochrome oxidase II gene among 10 orders of insects.</title>
        <authorList>
            <person name="Liu H."/>
            <person name="Beckenbach A.T."/>
        </authorList>
    </citation>
    <scope>NUCLEOTIDE SEQUENCE [GENOMIC DNA]</scope>
</reference>
<reference key="2">
    <citation type="journal article" date="1993" name="Mol. Biol. Evol.">
        <title>Relationships in the Drosophila obscura species group, inferred from mitochondrial cytochrome oxidase II sequences.</title>
        <authorList>
            <person name="Beckenbach A.T."/>
            <person name="Wei Y.W."/>
            <person name="Liu H."/>
        </authorList>
    </citation>
    <scope>NUCLEOTIDE SEQUENCE [GENOMIC DNA]</scope>
</reference>
<reference key="3">
    <citation type="journal article" date="2003" name="Mol. Ecol.">
        <title>Associations between mycophagous Drosophila and their Howardula nematode parasites: a worldwide phylogenetic shuffle.</title>
        <authorList>
            <person name="Perlman S.J."/>
            <person name="Spicer G.S."/>
            <person name="Shoemaker D.D."/>
            <person name="Jaenike J."/>
        </authorList>
    </citation>
    <scope>NUCLEOTIDE SEQUENCE [GENOMIC DNA]</scope>
</reference>
<reference key="4">
    <citation type="journal article" date="2008" name="Biol. Lett.">
        <title>Out of Hawaii: the origin and biogeography of the genus Scaptomyza (Diptera: Drosophilidae).</title>
        <authorList>
            <person name="O'Grady P.M."/>
            <person name="DeSalle R."/>
        </authorList>
    </citation>
    <scope>NUCLEOTIDE SEQUENCE [GENOMIC DNA]</scope>
</reference>
<keyword id="KW-0186">Copper</keyword>
<keyword id="KW-0249">Electron transport</keyword>
<keyword id="KW-0460">Magnesium</keyword>
<keyword id="KW-0472">Membrane</keyword>
<keyword id="KW-0479">Metal-binding</keyword>
<keyword id="KW-0496">Mitochondrion</keyword>
<keyword id="KW-0999">Mitochondrion inner membrane</keyword>
<keyword id="KW-0679">Respiratory chain</keyword>
<keyword id="KW-1278">Translocase</keyword>
<keyword id="KW-0812">Transmembrane</keyword>
<keyword id="KW-1133">Transmembrane helix</keyword>
<keyword id="KW-0813">Transport</keyword>
<dbReference type="EC" id="7.1.1.9"/>
<dbReference type="EMBL" id="M83963">
    <property type="protein sequence ID" value="AAA31722.1"/>
    <property type="molecule type" value="Genomic_DNA"/>
</dbReference>
<dbReference type="EMBL" id="M95150">
    <property type="protein sequence ID" value="AAA02780.2"/>
    <property type="molecule type" value="Genomic_DNA"/>
</dbReference>
<dbReference type="EMBL" id="AF519348">
    <property type="protein sequence ID" value="AAO21006.1"/>
    <property type="molecule type" value="Genomic_DNA"/>
</dbReference>
<dbReference type="EMBL" id="EU493762">
    <property type="protein sequence ID" value="ACC94846.1"/>
    <property type="molecule type" value="Genomic_DNA"/>
</dbReference>
<dbReference type="PIR" id="A45170">
    <property type="entry name" value="A45170"/>
</dbReference>
<dbReference type="SMR" id="P67799"/>
<dbReference type="GO" id="GO:0005743">
    <property type="term" value="C:mitochondrial inner membrane"/>
    <property type="evidence" value="ECO:0007669"/>
    <property type="project" value="UniProtKB-SubCell"/>
</dbReference>
<dbReference type="GO" id="GO:0005507">
    <property type="term" value="F:copper ion binding"/>
    <property type="evidence" value="ECO:0007669"/>
    <property type="project" value="InterPro"/>
</dbReference>
<dbReference type="GO" id="GO:0004129">
    <property type="term" value="F:cytochrome-c oxidase activity"/>
    <property type="evidence" value="ECO:0007669"/>
    <property type="project" value="UniProtKB-EC"/>
</dbReference>
<dbReference type="GO" id="GO:0042773">
    <property type="term" value="P:ATP synthesis coupled electron transport"/>
    <property type="evidence" value="ECO:0007669"/>
    <property type="project" value="TreeGrafter"/>
</dbReference>
<dbReference type="CDD" id="cd13912">
    <property type="entry name" value="CcO_II_C"/>
    <property type="match status" value="1"/>
</dbReference>
<dbReference type="FunFam" id="1.10.287.90:FF:000006">
    <property type="entry name" value="Cytochrome c oxidase subunit 2"/>
    <property type="match status" value="1"/>
</dbReference>
<dbReference type="FunFam" id="2.60.40.420:FF:000001">
    <property type="entry name" value="Cytochrome c oxidase subunit 2"/>
    <property type="match status" value="1"/>
</dbReference>
<dbReference type="Gene3D" id="1.10.287.90">
    <property type="match status" value="1"/>
</dbReference>
<dbReference type="Gene3D" id="2.60.40.420">
    <property type="entry name" value="Cupredoxins - blue copper proteins"/>
    <property type="match status" value="1"/>
</dbReference>
<dbReference type="InterPro" id="IPR045187">
    <property type="entry name" value="CcO_II"/>
</dbReference>
<dbReference type="InterPro" id="IPR002429">
    <property type="entry name" value="CcO_II-like_C"/>
</dbReference>
<dbReference type="InterPro" id="IPR034210">
    <property type="entry name" value="CcO_II_C"/>
</dbReference>
<dbReference type="InterPro" id="IPR001505">
    <property type="entry name" value="Copper_CuA"/>
</dbReference>
<dbReference type="InterPro" id="IPR008972">
    <property type="entry name" value="Cupredoxin"/>
</dbReference>
<dbReference type="InterPro" id="IPR014222">
    <property type="entry name" value="Cyt_c_oxidase_su2"/>
</dbReference>
<dbReference type="InterPro" id="IPR011759">
    <property type="entry name" value="Cyt_c_oxidase_su2_TM_dom"/>
</dbReference>
<dbReference type="InterPro" id="IPR036257">
    <property type="entry name" value="Cyt_c_oxidase_su2_TM_sf"/>
</dbReference>
<dbReference type="NCBIfam" id="TIGR02866">
    <property type="entry name" value="CoxB"/>
    <property type="match status" value="1"/>
</dbReference>
<dbReference type="PANTHER" id="PTHR22888:SF9">
    <property type="entry name" value="CYTOCHROME C OXIDASE SUBUNIT 2"/>
    <property type="match status" value="1"/>
</dbReference>
<dbReference type="PANTHER" id="PTHR22888">
    <property type="entry name" value="CYTOCHROME C OXIDASE, SUBUNIT II"/>
    <property type="match status" value="1"/>
</dbReference>
<dbReference type="Pfam" id="PF00116">
    <property type="entry name" value="COX2"/>
    <property type="match status" value="1"/>
</dbReference>
<dbReference type="Pfam" id="PF02790">
    <property type="entry name" value="COX2_TM"/>
    <property type="match status" value="1"/>
</dbReference>
<dbReference type="PRINTS" id="PR01166">
    <property type="entry name" value="CYCOXIDASEII"/>
</dbReference>
<dbReference type="SUPFAM" id="SSF49503">
    <property type="entry name" value="Cupredoxins"/>
    <property type="match status" value="1"/>
</dbReference>
<dbReference type="SUPFAM" id="SSF81464">
    <property type="entry name" value="Cytochrome c oxidase subunit II-like, transmembrane region"/>
    <property type="match status" value="1"/>
</dbReference>
<dbReference type="PROSITE" id="PS00078">
    <property type="entry name" value="COX2"/>
    <property type="match status" value="1"/>
</dbReference>
<dbReference type="PROSITE" id="PS50857">
    <property type="entry name" value="COX2_CUA"/>
    <property type="match status" value="1"/>
</dbReference>
<dbReference type="PROSITE" id="PS50999">
    <property type="entry name" value="COX2_TM"/>
    <property type="match status" value="1"/>
</dbReference>
<name>COX2_DROPS</name>
<gene>
    <name type="primary">mt:CoII</name>
    <name type="synonym">CoII</name>
</gene>
<protein>
    <recommendedName>
        <fullName>Cytochrome c oxidase subunit 2</fullName>
        <ecNumber>7.1.1.9</ecNumber>
    </recommendedName>
    <alternativeName>
        <fullName>Cytochrome c oxidase polypeptide II</fullName>
    </alternativeName>
</protein>
<sequence length="229" mass="26264">MSTWANLGLQDSASPLMEQLIFFHDHALLILVMITVLVGYLMFMLFFNSYVNRFLLHGQLIEMIWTILPAIILLFIAMPSLRLLYLLDEINEPSITLKSIGHQWYWSYEYSDFNNVEFDSYMIPTNELSNDGFRLLDVDNRIVLPMNSQIRILVTAADVIHSWTVPALGVKVDGTPGRLNQTNFFINRPGLFYGQCSEICGANHSFMPIVIESVPVNYFIKWISNSVNS</sequence>